<keyword id="KW-1185">Reference proteome</keyword>
<keyword id="KW-0687">Ribonucleoprotein</keyword>
<keyword id="KW-0689">Ribosomal protein</keyword>
<feature type="chain" id="PRO_1000006966" description="Large ribosomal subunit protein bL12">
    <location>
        <begin position="1"/>
        <end position="125"/>
    </location>
</feature>
<name>RL7_BRASO</name>
<comment type="function">
    <text evidence="1">Forms part of the ribosomal stalk which helps the ribosome interact with GTP-bound translation factors. Is thus essential for accurate translation.</text>
</comment>
<comment type="subunit">
    <text evidence="1">Homodimer. Part of the ribosomal stalk of the 50S ribosomal subunit. Forms a multimeric L10(L12)X complex, where L10 forms an elongated spine to which 2 to 4 L12 dimers bind in a sequential fashion. Binds GTP-bound translation factors.</text>
</comment>
<comment type="similarity">
    <text evidence="1">Belongs to the bacterial ribosomal protein bL12 family.</text>
</comment>
<dbReference type="EMBL" id="CU234118">
    <property type="protein sequence ID" value="CAL76856.1"/>
    <property type="molecule type" value="Genomic_DNA"/>
</dbReference>
<dbReference type="RefSeq" id="WP_011926044.1">
    <property type="nucleotide sequence ID" value="NC_009445.1"/>
</dbReference>
<dbReference type="SMR" id="A4YSI0"/>
<dbReference type="STRING" id="114615.BRADO3053"/>
<dbReference type="KEGG" id="bra:BRADO3053"/>
<dbReference type="eggNOG" id="COG0222">
    <property type="taxonomic scope" value="Bacteria"/>
</dbReference>
<dbReference type="HOGENOM" id="CLU_086499_3_0_5"/>
<dbReference type="OrthoDB" id="9811748at2"/>
<dbReference type="Proteomes" id="UP000001994">
    <property type="component" value="Chromosome"/>
</dbReference>
<dbReference type="GO" id="GO:0022625">
    <property type="term" value="C:cytosolic large ribosomal subunit"/>
    <property type="evidence" value="ECO:0007669"/>
    <property type="project" value="TreeGrafter"/>
</dbReference>
<dbReference type="GO" id="GO:0003729">
    <property type="term" value="F:mRNA binding"/>
    <property type="evidence" value="ECO:0007669"/>
    <property type="project" value="TreeGrafter"/>
</dbReference>
<dbReference type="GO" id="GO:0003735">
    <property type="term" value="F:structural constituent of ribosome"/>
    <property type="evidence" value="ECO:0007669"/>
    <property type="project" value="InterPro"/>
</dbReference>
<dbReference type="GO" id="GO:0006412">
    <property type="term" value="P:translation"/>
    <property type="evidence" value="ECO:0007669"/>
    <property type="project" value="UniProtKB-UniRule"/>
</dbReference>
<dbReference type="CDD" id="cd00387">
    <property type="entry name" value="Ribosomal_L7_L12"/>
    <property type="match status" value="1"/>
</dbReference>
<dbReference type="FunFam" id="1.20.5.710:FF:000007">
    <property type="entry name" value="50S ribosomal protein L7/L12"/>
    <property type="match status" value="1"/>
</dbReference>
<dbReference type="FunFam" id="3.30.1390.10:FF:000001">
    <property type="entry name" value="50S ribosomal protein L7/L12"/>
    <property type="match status" value="1"/>
</dbReference>
<dbReference type="Gene3D" id="3.30.1390.10">
    <property type="match status" value="1"/>
</dbReference>
<dbReference type="Gene3D" id="1.20.5.710">
    <property type="entry name" value="Single helix bin"/>
    <property type="match status" value="1"/>
</dbReference>
<dbReference type="HAMAP" id="MF_00368">
    <property type="entry name" value="Ribosomal_bL12"/>
    <property type="match status" value="1"/>
</dbReference>
<dbReference type="InterPro" id="IPR000206">
    <property type="entry name" value="Ribosomal_bL12"/>
</dbReference>
<dbReference type="InterPro" id="IPR013823">
    <property type="entry name" value="Ribosomal_bL12_C"/>
</dbReference>
<dbReference type="InterPro" id="IPR014719">
    <property type="entry name" value="Ribosomal_bL12_C/ClpS-like"/>
</dbReference>
<dbReference type="InterPro" id="IPR008932">
    <property type="entry name" value="Ribosomal_bL12_oligo"/>
</dbReference>
<dbReference type="InterPro" id="IPR036235">
    <property type="entry name" value="Ribosomal_bL12_oligo_N_sf"/>
</dbReference>
<dbReference type="NCBIfam" id="TIGR00855">
    <property type="entry name" value="L12"/>
    <property type="match status" value="1"/>
</dbReference>
<dbReference type="PANTHER" id="PTHR45987">
    <property type="entry name" value="39S RIBOSOMAL PROTEIN L12"/>
    <property type="match status" value="1"/>
</dbReference>
<dbReference type="PANTHER" id="PTHR45987:SF4">
    <property type="entry name" value="LARGE RIBOSOMAL SUBUNIT PROTEIN BL12M"/>
    <property type="match status" value="1"/>
</dbReference>
<dbReference type="Pfam" id="PF00542">
    <property type="entry name" value="Ribosomal_L12"/>
    <property type="match status" value="1"/>
</dbReference>
<dbReference type="Pfam" id="PF16320">
    <property type="entry name" value="Ribosomal_L12_N"/>
    <property type="match status" value="1"/>
</dbReference>
<dbReference type="SUPFAM" id="SSF54736">
    <property type="entry name" value="ClpS-like"/>
    <property type="match status" value="1"/>
</dbReference>
<dbReference type="SUPFAM" id="SSF48300">
    <property type="entry name" value="Ribosomal protein L7/12, oligomerisation (N-terminal) domain"/>
    <property type="match status" value="1"/>
</dbReference>
<reference key="1">
    <citation type="journal article" date="2007" name="Science">
        <title>Legumes symbioses: absence of nod genes in photosynthetic bradyrhizobia.</title>
        <authorList>
            <person name="Giraud E."/>
            <person name="Moulin L."/>
            <person name="Vallenet D."/>
            <person name="Barbe V."/>
            <person name="Cytryn E."/>
            <person name="Avarre J.-C."/>
            <person name="Jaubert M."/>
            <person name="Simon D."/>
            <person name="Cartieaux F."/>
            <person name="Prin Y."/>
            <person name="Bena G."/>
            <person name="Hannibal L."/>
            <person name="Fardoux J."/>
            <person name="Kojadinovic M."/>
            <person name="Vuillet L."/>
            <person name="Lajus A."/>
            <person name="Cruveiller S."/>
            <person name="Rouy Z."/>
            <person name="Mangenot S."/>
            <person name="Segurens B."/>
            <person name="Dossat C."/>
            <person name="Franck W.L."/>
            <person name="Chang W.-S."/>
            <person name="Saunders E."/>
            <person name="Bruce D."/>
            <person name="Richardson P."/>
            <person name="Normand P."/>
            <person name="Dreyfus B."/>
            <person name="Pignol D."/>
            <person name="Stacey G."/>
            <person name="Emerich D."/>
            <person name="Vermeglio A."/>
            <person name="Medigue C."/>
            <person name="Sadowsky M."/>
        </authorList>
    </citation>
    <scope>NUCLEOTIDE SEQUENCE [LARGE SCALE GENOMIC DNA]</scope>
    <source>
        <strain>ORS 278</strain>
    </source>
</reference>
<gene>
    <name evidence="1" type="primary">rplL</name>
    <name type="ordered locus">BRADO3053</name>
</gene>
<proteinExistence type="inferred from homology"/>
<organism>
    <name type="scientific">Bradyrhizobium sp. (strain ORS 278)</name>
    <dbReference type="NCBI Taxonomy" id="114615"/>
    <lineage>
        <taxon>Bacteria</taxon>
        <taxon>Pseudomonadati</taxon>
        <taxon>Pseudomonadota</taxon>
        <taxon>Alphaproteobacteria</taxon>
        <taxon>Hyphomicrobiales</taxon>
        <taxon>Nitrobacteraceae</taxon>
        <taxon>Bradyrhizobium</taxon>
    </lineage>
</organism>
<sequence>MADLQKIVDDLSSLTVLEAAELAKLLEEKWGVSAAAAVAVAAPGGGGAAAAPAEEKTEFTVVLASAGDKKIEVIKEVRAITGLGLKEAKDLVEGAPKPVKEGVNKEEAEKIKGQLEKAGAKVELK</sequence>
<protein>
    <recommendedName>
        <fullName evidence="1">Large ribosomal subunit protein bL12</fullName>
    </recommendedName>
    <alternativeName>
        <fullName evidence="2">50S ribosomal protein L7/L12</fullName>
    </alternativeName>
</protein>
<evidence type="ECO:0000255" key="1">
    <source>
        <dbReference type="HAMAP-Rule" id="MF_00368"/>
    </source>
</evidence>
<evidence type="ECO:0000305" key="2"/>
<accession>A4YSI0</accession>